<evidence type="ECO:0000255" key="1">
    <source>
        <dbReference type="HAMAP-Rule" id="MF_01521"/>
    </source>
</evidence>
<protein>
    <recommendedName>
        <fullName evidence="1">Putative manganese efflux pump MntP</fullName>
    </recommendedName>
</protein>
<proteinExistence type="inferred from homology"/>
<comment type="function">
    <text evidence="1">Probably functions as a manganese efflux pump.</text>
</comment>
<comment type="subcellular location">
    <subcellularLocation>
        <location evidence="1">Cell membrane</location>
        <topology evidence="1">Multi-pass membrane protein</topology>
    </subcellularLocation>
</comment>
<comment type="similarity">
    <text evidence="1">Belongs to the MntP (TC 9.B.29) family.</text>
</comment>
<keyword id="KW-1003">Cell membrane</keyword>
<keyword id="KW-0406">Ion transport</keyword>
<keyword id="KW-0464">Manganese</keyword>
<keyword id="KW-0472">Membrane</keyword>
<keyword id="KW-0812">Transmembrane</keyword>
<keyword id="KW-1133">Transmembrane helix</keyword>
<keyword id="KW-0813">Transport</keyword>
<dbReference type="EMBL" id="AJ965256">
    <property type="protein sequence ID" value="CAI83166.1"/>
    <property type="molecule type" value="Genomic_DNA"/>
</dbReference>
<dbReference type="RefSeq" id="WP_011309517.1">
    <property type="nucleotide sequence ID" value="NC_007356.1"/>
</dbReference>
<dbReference type="KEGG" id="deh:cbdbA1062"/>
<dbReference type="HOGENOM" id="CLU_096410_3_0_0"/>
<dbReference type="Proteomes" id="UP000000433">
    <property type="component" value="Chromosome"/>
</dbReference>
<dbReference type="GO" id="GO:0005886">
    <property type="term" value="C:plasma membrane"/>
    <property type="evidence" value="ECO:0007669"/>
    <property type="project" value="UniProtKB-SubCell"/>
</dbReference>
<dbReference type="GO" id="GO:0005384">
    <property type="term" value="F:manganese ion transmembrane transporter activity"/>
    <property type="evidence" value="ECO:0007669"/>
    <property type="project" value="UniProtKB-UniRule"/>
</dbReference>
<dbReference type="HAMAP" id="MF_01521">
    <property type="entry name" value="MntP_pump"/>
    <property type="match status" value="1"/>
</dbReference>
<dbReference type="InterPro" id="IPR003810">
    <property type="entry name" value="Mntp/YtaF"/>
</dbReference>
<dbReference type="InterPro" id="IPR022929">
    <property type="entry name" value="Put_MntP"/>
</dbReference>
<dbReference type="PANTHER" id="PTHR35529">
    <property type="entry name" value="MANGANESE EFFLUX PUMP MNTP-RELATED"/>
    <property type="match status" value="1"/>
</dbReference>
<dbReference type="PANTHER" id="PTHR35529:SF1">
    <property type="entry name" value="MANGANESE EFFLUX PUMP MNTP-RELATED"/>
    <property type="match status" value="1"/>
</dbReference>
<dbReference type="Pfam" id="PF02659">
    <property type="entry name" value="Mntp"/>
    <property type="match status" value="1"/>
</dbReference>
<organism>
    <name type="scientific">Dehalococcoides mccartyi (strain CBDB1)</name>
    <dbReference type="NCBI Taxonomy" id="255470"/>
    <lineage>
        <taxon>Bacteria</taxon>
        <taxon>Bacillati</taxon>
        <taxon>Chloroflexota</taxon>
        <taxon>Dehalococcoidia</taxon>
        <taxon>Dehalococcoidales</taxon>
        <taxon>Dehalococcoidaceae</taxon>
        <taxon>Dehalococcoides</taxon>
    </lineage>
</organism>
<gene>
    <name evidence="1" type="primary">mntP</name>
    <name type="ordered locus">cbdbA1062</name>
</gene>
<name>MNTP_DEHMC</name>
<accession>Q3ZY72</accession>
<sequence length="193" mass="20370">MSLLSVIFIALGLSADCFAVSIGIACTHASIKSRVIWRVAGTFGLFQAGMVVIGFFAGLSVIDIISAFDHWIAFGLLLFIGVRMIYEALQGEDDQELVKLDLTRGLGLLGVAVATSIDALAVGLAFAVEETNIGLAALLIGLVSLTVSFLGFKLGNRISFMASRWVGVAGGLVLVFIGLKILAEHTLGWDILL</sequence>
<feature type="chain" id="PRO_0000296925" description="Putative manganese efflux pump MntP">
    <location>
        <begin position="1"/>
        <end position="193"/>
    </location>
</feature>
<feature type="transmembrane region" description="Helical" evidence="1">
    <location>
        <begin position="6"/>
        <end position="26"/>
    </location>
</feature>
<feature type="transmembrane region" description="Helical" evidence="1">
    <location>
        <begin position="48"/>
        <end position="68"/>
    </location>
</feature>
<feature type="transmembrane region" description="Helical" evidence="1">
    <location>
        <begin position="71"/>
        <end position="91"/>
    </location>
</feature>
<feature type="transmembrane region" description="Helical" evidence="1">
    <location>
        <begin position="108"/>
        <end position="128"/>
    </location>
</feature>
<feature type="transmembrane region" description="Helical" evidence="1">
    <location>
        <begin position="132"/>
        <end position="152"/>
    </location>
</feature>
<feature type="transmembrane region" description="Helical" evidence="1">
    <location>
        <begin position="165"/>
        <end position="185"/>
    </location>
</feature>
<reference key="1">
    <citation type="journal article" date="2005" name="Nat. Biotechnol.">
        <title>Genome sequence of the chlorinated compound-respiring bacterium Dehalococcoides species strain CBDB1.</title>
        <authorList>
            <person name="Kube M."/>
            <person name="Beck A."/>
            <person name="Zinder S.H."/>
            <person name="Kuhl H."/>
            <person name="Reinhardt R."/>
            <person name="Adrian L."/>
        </authorList>
    </citation>
    <scope>NUCLEOTIDE SEQUENCE [LARGE SCALE GENOMIC DNA]</scope>
    <source>
        <strain>CBDB1</strain>
    </source>
</reference>